<reference key="1">
    <citation type="journal article" date="1977" name="Hoppe-Seyler's Z. Physiol. Chem.">
        <title>The sequence of alpha-chains from pig and llama hemoglobins (aspects on the respiration in highlands).</title>
        <authorList>
            <person name="Braunitzer G."/>
            <person name="Schrank B."/>
            <person name="Stangl A."/>
        </authorList>
    </citation>
    <scope>PROTEIN SEQUENCE</scope>
</reference>
<reference key="2">
    <citation type="journal article" date="1978" name="Hoppe-Seyler's Z. Physiol. Chem.">
        <title>The interaction between phosphate and protein, and the respiration of the llama, the human fetus and the horse.</title>
        <authorList>
            <person name="Braunitzer G."/>
            <person name="Schrank B."/>
            <person name="Stangl A."/>
            <person name="Bauer C."/>
        </authorList>
    </citation>
    <scope>PROTEIN SEQUENCE</scope>
</reference>
<proteinExistence type="evidence at protein level"/>
<sequence length="141" mass="15104">VLSSKDKANIKTAFGKIGGHAADYGAEALERMFLGFPTTKTYFPHFDLSHGSAQVKAHGKKVGDALTKAADHLDDLPSALSALSDLHAHKLRVDPVNFKLLSHCLLVTVAAHHPGDFTPAVDASLDKFLANVSTVLTSKYR</sequence>
<protein>
    <recommendedName>
        <fullName>Hemoglobin subunit alpha</fullName>
    </recommendedName>
    <alternativeName>
        <fullName>Alpha-globin</fullName>
    </alternativeName>
    <alternativeName>
        <fullName>Hemoglobin alpha chain</fullName>
    </alternativeName>
    <component>
        <recommendedName>
            <fullName evidence="2">Hemopressin</fullName>
        </recommendedName>
    </component>
</protein>
<keyword id="KW-0007">Acetylation</keyword>
<keyword id="KW-0903">Direct protein sequencing</keyword>
<keyword id="KW-0349">Heme</keyword>
<keyword id="KW-0408">Iron</keyword>
<keyword id="KW-0479">Metal-binding</keyword>
<keyword id="KW-0561">Oxygen transport</keyword>
<keyword id="KW-0597">Phosphoprotein</keyword>
<keyword id="KW-0813">Transport</keyword>
<name>HBA_LAMGL</name>
<organism>
    <name type="scientific">Lama glama</name>
    <name type="common">Llama</name>
    <dbReference type="NCBI Taxonomy" id="9844"/>
    <lineage>
        <taxon>Eukaryota</taxon>
        <taxon>Metazoa</taxon>
        <taxon>Chordata</taxon>
        <taxon>Craniata</taxon>
        <taxon>Vertebrata</taxon>
        <taxon>Euteleostomi</taxon>
        <taxon>Mammalia</taxon>
        <taxon>Eutheria</taxon>
        <taxon>Laurasiatheria</taxon>
        <taxon>Artiodactyla</taxon>
        <taxon>Tylopoda</taxon>
        <taxon>Camelidae</taxon>
        <taxon>Lama</taxon>
    </lineage>
</organism>
<gene>
    <name type="primary">HBA</name>
</gene>
<evidence type="ECO:0000250" key="1">
    <source>
        <dbReference type="UniProtKB" id="P01942"/>
    </source>
</evidence>
<evidence type="ECO:0000250" key="2">
    <source>
        <dbReference type="UniProtKB" id="P01946"/>
    </source>
</evidence>
<evidence type="ECO:0000250" key="3">
    <source>
        <dbReference type="UniProtKB" id="P69905"/>
    </source>
</evidence>
<evidence type="ECO:0000255" key="4">
    <source>
        <dbReference type="PROSITE-ProRule" id="PRU00238"/>
    </source>
</evidence>
<accession>P01973</accession>
<dbReference type="PIR" id="A02297">
    <property type="entry name" value="HALL"/>
</dbReference>
<dbReference type="SMR" id="P01973"/>
<dbReference type="PeptideAtlas" id="P01973"/>
<dbReference type="GO" id="GO:0072562">
    <property type="term" value="C:blood microparticle"/>
    <property type="evidence" value="ECO:0007669"/>
    <property type="project" value="TreeGrafter"/>
</dbReference>
<dbReference type="GO" id="GO:0031838">
    <property type="term" value="C:haptoglobin-hemoglobin complex"/>
    <property type="evidence" value="ECO:0007669"/>
    <property type="project" value="TreeGrafter"/>
</dbReference>
<dbReference type="GO" id="GO:0005833">
    <property type="term" value="C:hemoglobin complex"/>
    <property type="evidence" value="ECO:0007669"/>
    <property type="project" value="InterPro"/>
</dbReference>
<dbReference type="GO" id="GO:0031720">
    <property type="term" value="F:haptoglobin binding"/>
    <property type="evidence" value="ECO:0007669"/>
    <property type="project" value="TreeGrafter"/>
</dbReference>
<dbReference type="GO" id="GO:0020037">
    <property type="term" value="F:heme binding"/>
    <property type="evidence" value="ECO:0007669"/>
    <property type="project" value="InterPro"/>
</dbReference>
<dbReference type="GO" id="GO:0005506">
    <property type="term" value="F:iron ion binding"/>
    <property type="evidence" value="ECO:0007669"/>
    <property type="project" value="InterPro"/>
</dbReference>
<dbReference type="GO" id="GO:0043177">
    <property type="term" value="F:organic acid binding"/>
    <property type="evidence" value="ECO:0007669"/>
    <property type="project" value="TreeGrafter"/>
</dbReference>
<dbReference type="GO" id="GO:0019825">
    <property type="term" value="F:oxygen binding"/>
    <property type="evidence" value="ECO:0007669"/>
    <property type="project" value="InterPro"/>
</dbReference>
<dbReference type="GO" id="GO:0005344">
    <property type="term" value="F:oxygen carrier activity"/>
    <property type="evidence" value="ECO:0007669"/>
    <property type="project" value="UniProtKB-KW"/>
</dbReference>
<dbReference type="GO" id="GO:0004601">
    <property type="term" value="F:peroxidase activity"/>
    <property type="evidence" value="ECO:0007669"/>
    <property type="project" value="TreeGrafter"/>
</dbReference>
<dbReference type="GO" id="GO:0042744">
    <property type="term" value="P:hydrogen peroxide catabolic process"/>
    <property type="evidence" value="ECO:0007669"/>
    <property type="project" value="TreeGrafter"/>
</dbReference>
<dbReference type="CDD" id="cd08927">
    <property type="entry name" value="Hb-alpha-like"/>
    <property type="match status" value="1"/>
</dbReference>
<dbReference type="FunFam" id="1.10.490.10:FF:000002">
    <property type="entry name" value="Hemoglobin subunit alpha"/>
    <property type="match status" value="1"/>
</dbReference>
<dbReference type="Gene3D" id="1.10.490.10">
    <property type="entry name" value="Globins"/>
    <property type="match status" value="1"/>
</dbReference>
<dbReference type="InterPro" id="IPR000971">
    <property type="entry name" value="Globin"/>
</dbReference>
<dbReference type="InterPro" id="IPR009050">
    <property type="entry name" value="Globin-like_sf"/>
</dbReference>
<dbReference type="InterPro" id="IPR012292">
    <property type="entry name" value="Globin/Proto"/>
</dbReference>
<dbReference type="InterPro" id="IPR002338">
    <property type="entry name" value="Hemoglobin_a-typ"/>
</dbReference>
<dbReference type="InterPro" id="IPR050056">
    <property type="entry name" value="Hemoglobin_oxygen_transport"/>
</dbReference>
<dbReference type="InterPro" id="IPR002339">
    <property type="entry name" value="Hemoglobin_pi"/>
</dbReference>
<dbReference type="PANTHER" id="PTHR11442">
    <property type="entry name" value="HEMOGLOBIN FAMILY MEMBER"/>
    <property type="match status" value="1"/>
</dbReference>
<dbReference type="PANTHER" id="PTHR11442:SF48">
    <property type="entry name" value="HEMOGLOBIN SUBUNIT ALPHA"/>
    <property type="match status" value="1"/>
</dbReference>
<dbReference type="Pfam" id="PF00042">
    <property type="entry name" value="Globin"/>
    <property type="match status" value="1"/>
</dbReference>
<dbReference type="PRINTS" id="PR00612">
    <property type="entry name" value="ALPHAHAEM"/>
</dbReference>
<dbReference type="PRINTS" id="PR00815">
    <property type="entry name" value="PIHAEM"/>
</dbReference>
<dbReference type="SUPFAM" id="SSF46458">
    <property type="entry name" value="Globin-like"/>
    <property type="match status" value="1"/>
</dbReference>
<dbReference type="PROSITE" id="PS01033">
    <property type="entry name" value="GLOBIN"/>
    <property type="match status" value="1"/>
</dbReference>
<feature type="chain" id="PRO_0000052657" description="Hemoglobin subunit alpha">
    <location>
        <begin position="1"/>
        <end position="141"/>
    </location>
</feature>
<feature type="peptide" id="PRO_0000455885" description="Hemopressin" evidence="2">
    <location>
        <begin position="95"/>
        <end position="103"/>
    </location>
</feature>
<feature type="domain" description="Globin" evidence="4">
    <location>
        <begin position="1"/>
        <end position="141"/>
    </location>
</feature>
<feature type="binding site" evidence="4">
    <location>
        <position position="58"/>
    </location>
    <ligand>
        <name>O2</name>
        <dbReference type="ChEBI" id="CHEBI:15379"/>
    </ligand>
</feature>
<feature type="binding site" description="proximal binding residue" evidence="4">
    <location>
        <position position="87"/>
    </location>
    <ligand>
        <name>heme b</name>
        <dbReference type="ChEBI" id="CHEBI:60344"/>
    </ligand>
    <ligandPart>
        <name>Fe</name>
        <dbReference type="ChEBI" id="CHEBI:18248"/>
    </ligandPart>
</feature>
<feature type="modified residue" description="Phosphoserine" evidence="3">
    <location>
        <position position="3"/>
    </location>
</feature>
<feature type="modified residue" description="N6-succinyllysine" evidence="1">
    <location>
        <position position="7"/>
    </location>
</feature>
<feature type="modified residue" description="N6-succinyllysine" evidence="1">
    <location>
        <position position="11"/>
    </location>
</feature>
<feature type="modified residue" description="N6-acetyllysine; alternate" evidence="3">
    <location>
        <position position="16"/>
    </location>
</feature>
<feature type="modified residue" description="N6-succinyllysine; alternate" evidence="1">
    <location>
        <position position="16"/>
    </location>
</feature>
<feature type="modified residue" description="Phosphotyrosine" evidence="3">
    <location>
        <position position="24"/>
    </location>
</feature>
<feature type="modified residue" description="N6-succinyllysine" evidence="1">
    <location>
        <position position="40"/>
    </location>
</feature>
<feature type="modified residue" description="Phosphoserine" evidence="3">
    <location>
        <position position="49"/>
    </location>
</feature>
<feature type="modified residue" description="Phosphoserine" evidence="1">
    <location>
        <position position="102"/>
    </location>
</feature>
<feature type="modified residue" description="Phosphothreonine" evidence="1">
    <location>
        <position position="108"/>
    </location>
</feature>
<feature type="modified residue" description="Phosphoserine" evidence="1">
    <location>
        <position position="124"/>
    </location>
</feature>
<feature type="modified residue" description="Phosphothreonine" evidence="1">
    <location>
        <position position="134"/>
    </location>
</feature>
<feature type="modified residue" description="Phosphothreonine" evidence="1">
    <location>
        <position position="137"/>
    </location>
</feature>
<feature type="modified residue" description="Phosphoserine" evidence="1">
    <location>
        <position position="138"/>
    </location>
</feature>
<comment type="function">
    <text>Involved in oxygen transport from the lung to the various peripheral tissues.</text>
</comment>
<comment type="function">
    <molecule>Hemopressin</molecule>
    <text evidence="2">Hemopressin acts as an antagonist peptide of the cannabinoid receptor CNR1. Hemopressin-binding efficiently blocks cannabinoid receptor CNR1 and subsequent signaling.</text>
</comment>
<comment type="subunit">
    <text>Heterotetramer of two alpha chains and two beta chains.</text>
</comment>
<comment type="tissue specificity">
    <text>Red blood cells.</text>
</comment>
<comment type="similarity">
    <text evidence="4">Belongs to the globin family.</text>
</comment>